<comment type="function">
    <text evidence="1">Component of the ERMES/MDM complex, which serves as a molecular tether to connect the endoplasmic reticulum and mitochondria. Components of this complex are involved in the control of mitochondrial shape and protein biogenesis and may function in phospholipid exchange. MDM10 is involved in the late assembly steps of the general translocase of the mitochondrial outer membrane (TOM complex). Functions in the TOM40-specific route of the assembly of outer membrane beta-barrel proteins, including the association of TOM40 with the receptor TOM22 and small TOM proteins. Can associate with the SAM(core) complex as well as the MDM12-MMM1 complex, both involved in late steps of the major beta-barrel assembly pathway, that is responsible for biogenesis of all outer membrane beta-barrel proteins. May act as a switch that shuttles between both complexes and channels precursor proteins into the TOM40-specific pathway. Plays a role in mitochondrial morphology and in the inheritance of mitochondria.</text>
</comment>
<comment type="subunit">
    <text evidence="1">Component of the ER-mitochondria encounter structure (ERMES) or MDM complex, composed of MMM1, MDM10, MDM12 and MDM34. Associates with the mitochondrial outer membrane sorting assembly machinery SAM(core) complex.</text>
</comment>
<comment type="subcellular location">
    <subcellularLocation>
        <location evidence="1">Mitochondrion outer membrane</location>
        <topology evidence="1">Multi-pass membrane protein</topology>
    </subcellularLocation>
    <text evidence="1">The ERMES/MDM complex localizes to a few discrete foci (around 10 per single cell), that represent mitochondria-endoplasmic reticulum junctions. These foci are often found next to mtDNA nucleoids.</text>
</comment>
<comment type="domain">
    <text>Lacks alpha-helical transmembrane segments, suggesting that it resides in the membrane via beta-sheet conformations similar to those predicted for other outer membrane proteins and porin.</text>
</comment>
<comment type="similarity">
    <text evidence="1">Belongs to the MDM10 family.</text>
</comment>
<organism>
    <name type="scientific">Yarrowia lipolytica (strain CLIB 122 / E 150)</name>
    <name type="common">Yeast</name>
    <name type="synonym">Candida lipolytica</name>
    <dbReference type="NCBI Taxonomy" id="284591"/>
    <lineage>
        <taxon>Eukaryota</taxon>
        <taxon>Fungi</taxon>
        <taxon>Dikarya</taxon>
        <taxon>Ascomycota</taxon>
        <taxon>Saccharomycotina</taxon>
        <taxon>Dipodascomycetes</taxon>
        <taxon>Dipodascales</taxon>
        <taxon>Dipodascales incertae sedis</taxon>
        <taxon>Yarrowia</taxon>
    </lineage>
</organism>
<gene>
    <name evidence="1" type="primary">MDM10</name>
    <name type="ordered locus">YALI0D02959g</name>
</gene>
<keyword id="KW-0472">Membrane</keyword>
<keyword id="KW-0496">Mitochondrion</keyword>
<keyword id="KW-1000">Mitochondrion outer membrane</keyword>
<keyword id="KW-1185">Reference proteome</keyword>
<keyword id="KW-0812">Transmembrane</keyword>
<keyword id="KW-1134">Transmembrane beta strand</keyword>
<accession>Q6CAG4</accession>
<feature type="chain" id="PRO_0000384206" description="Mitochondrial distribution and morphology protein 10">
    <location>
        <begin position="1"/>
        <end position="353"/>
    </location>
</feature>
<evidence type="ECO:0000255" key="1">
    <source>
        <dbReference type="HAMAP-Rule" id="MF_03102"/>
    </source>
</evidence>
<proteinExistence type="inferred from homology"/>
<name>MDM10_YARLI</name>
<dbReference type="EMBL" id="CR382130">
    <property type="protein sequence ID" value="CAG80536.1"/>
    <property type="molecule type" value="Genomic_DNA"/>
</dbReference>
<dbReference type="RefSeq" id="XP_502348.1">
    <property type="nucleotide sequence ID" value="XM_502348.1"/>
</dbReference>
<dbReference type="SMR" id="Q6CAG4"/>
<dbReference type="FunCoup" id="Q6CAG4">
    <property type="interactions" value="59"/>
</dbReference>
<dbReference type="STRING" id="284591.Q6CAG4"/>
<dbReference type="EnsemblFungi" id="CAG80536">
    <property type="protein sequence ID" value="CAG80536"/>
    <property type="gene ID" value="YALI0_D02959g"/>
</dbReference>
<dbReference type="KEGG" id="yli:2910550"/>
<dbReference type="VEuPathDB" id="FungiDB:YALI0_D02959g"/>
<dbReference type="HOGENOM" id="CLU_026505_0_0_1"/>
<dbReference type="InParanoid" id="Q6CAG4"/>
<dbReference type="OMA" id="VPGYRQI"/>
<dbReference type="OrthoDB" id="15704at4891"/>
<dbReference type="Proteomes" id="UP000001300">
    <property type="component" value="Chromosome D"/>
</dbReference>
<dbReference type="GO" id="GO:0032865">
    <property type="term" value="C:ERMES complex"/>
    <property type="evidence" value="ECO:0000318"/>
    <property type="project" value="GO_Central"/>
</dbReference>
<dbReference type="GO" id="GO:0001401">
    <property type="term" value="C:SAM complex"/>
    <property type="evidence" value="ECO:0000318"/>
    <property type="project" value="GO_Central"/>
</dbReference>
<dbReference type="GO" id="GO:0051654">
    <property type="term" value="P:establishment of mitochondrion localization"/>
    <property type="evidence" value="ECO:0000318"/>
    <property type="project" value="GO_Central"/>
</dbReference>
<dbReference type="GO" id="GO:0000002">
    <property type="term" value="P:mitochondrial genome maintenance"/>
    <property type="evidence" value="ECO:0007669"/>
    <property type="project" value="UniProtKB-UniRule"/>
</dbReference>
<dbReference type="GO" id="GO:0070096">
    <property type="term" value="P:mitochondrial outer membrane translocase complex assembly"/>
    <property type="evidence" value="ECO:0000318"/>
    <property type="project" value="GO_Central"/>
</dbReference>
<dbReference type="GO" id="GO:1990456">
    <property type="term" value="P:mitochondrion-endoplasmic reticulum membrane tethering"/>
    <property type="evidence" value="ECO:0000318"/>
    <property type="project" value="GO_Central"/>
</dbReference>
<dbReference type="GO" id="GO:0015914">
    <property type="term" value="P:phospholipid transport"/>
    <property type="evidence" value="ECO:0000318"/>
    <property type="project" value="GO_Central"/>
</dbReference>
<dbReference type="GO" id="GO:0045040">
    <property type="term" value="P:protein insertion into mitochondrial outer membrane"/>
    <property type="evidence" value="ECO:0000318"/>
    <property type="project" value="GO_Central"/>
</dbReference>
<dbReference type="HAMAP" id="MF_03102">
    <property type="entry name" value="Mdm10"/>
    <property type="match status" value="1"/>
</dbReference>
<dbReference type="InterPro" id="IPR027539">
    <property type="entry name" value="Mdm10"/>
</dbReference>
<dbReference type="PANTHER" id="PTHR28035">
    <property type="entry name" value="MITOCHONDRIAL DISTRIBUTION AND MORPHOLOGY PROTEIN 10"/>
    <property type="match status" value="1"/>
</dbReference>
<dbReference type="PANTHER" id="PTHR28035:SF1">
    <property type="entry name" value="MITOCHONDRIAL DISTRIBUTION AND MORPHOLOGY PROTEIN 10"/>
    <property type="match status" value="1"/>
</dbReference>
<dbReference type="Pfam" id="PF12519">
    <property type="entry name" value="MDM10"/>
    <property type="match status" value="1"/>
</dbReference>
<reference key="1">
    <citation type="journal article" date="2004" name="Nature">
        <title>Genome evolution in yeasts.</title>
        <authorList>
            <person name="Dujon B."/>
            <person name="Sherman D."/>
            <person name="Fischer G."/>
            <person name="Durrens P."/>
            <person name="Casaregola S."/>
            <person name="Lafontaine I."/>
            <person name="de Montigny J."/>
            <person name="Marck C."/>
            <person name="Neuveglise C."/>
            <person name="Talla E."/>
            <person name="Goffard N."/>
            <person name="Frangeul L."/>
            <person name="Aigle M."/>
            <person name="Anthouard V."/>
            <person name="Babour A."/>
            <person name="Barbe V."/>
            <person name="Barnay S."/>
            <person name="Blanchin S."/>
            <person name="Beckerich J.-M."/>
            <person name="Beyne E."/>
            <person name="Bleykasten C."/>
            <person name="Boisrame A."/>
            <person name="Boyer J."/>
            <person name="Cattolico L."/>
            <person name="Confanioleri F."/>
            <person name="de Daruvar A."/>
            <person name="Despons L."/>
            <person name="Fabre E."/>
            <person name="Fairhead C."/>
            <person name="Ferry-Dumazet H."/>
            <person name="Groppi A."/>
            <person name="Hantraye F."/>
            <person name="Hennequin C."/>
            <person name="Jauniaux N."/>
            <person name="Joyet P."/>
            <person name="Kachouri R."/>
            <person name="Kerrest A."/>
            <person name="Koszul R."/>
            <person name="Lemaire M."/>
            <person name="Lesur I."/>
            <person name="Ma L."/>
            <person name="Muller H."/>
            <person name="Nicaud J.-M."/>
            <person name="Nikolski M."/>
            <person name="Oztas S."/>
            <person name="Ozier-Kalogeropoulos O."/>
            <person name="Pellenz S."/>
            <person name="Potier S."/>
            <person name="Richard G.-F."/>
            <person name="Straub M.-L."/>
            <person name="Suleau A."/>
            <person name="Swennen D."/>
            <person name="Tekaia F."/>
            <person name="Wesolowski-Louvel M."/>
            <person name="Westhof E."/>
            <person name="Wirth B."/>
            <person name="Zeniou-Meyer M."/>
            <person name="Zivanovic Y."/>
            <person name="Bolotin-Fukuhara M."/>
            <person name="Thierry A."/>
            <person name="Bouchier C."/>
            <person name="Caudron B."/>
            <person name="Scarpelli C."/>
            <person name="Gaillardin C."/>
            <person name="Weissenbach J."/>
            <person name="Wincker P."/>
            <person name="Souciet J.-L."/>
        </authorList>
    </citation>
    <scope>NUCLEOTIDE SEQUENCE [LARGE SCALE GENOMIC DNA]</scope>
    <source>
        <strain>CLIB 122 / E 150</strain>
    </source>
</reference>
<protein>
    <recommendedName>
        <fullName evidence="1">Mitochondrial distribution and morphology protein 10</fullName>
    </recommendedName>
    <alternativeName>
        <fullName evidence="1">Mitochondrial inheritance component MDM10</fullName>
    </alternativeName>
</protein>
<sequence length="353" mass="39150">MLTFMEHILYSFYDASGWHRDNLYALLTHSSQNLIDFRVPEGVAMNVSALSTPNSASSYTLTNLGHIQGSVAYLSTSLSLPRPHSGTLDLHTVVPGYHKLDPINSQDRIYDTIWQGGKPIHRQDSLLFGRLALPTNTLEAMYVRRFNPTTQLLVTCVSGAHLKSGGALTLYWQKDCRQYAHELLYSTNEALLGARGLYNFGVDMSKPHIASRLSVGGEFYYGVLNKSPGMSTALRYVTQSAYTGSPLTMTLTCNPIMGEFSSTYSLRTGPSSSFSTRYDFNMYSYLSNLSMGAEVWKSRDSVFKLSSSLQDKTARVLWGGRYKDILVNTGVAFDYGGRVPDVTAIGVEFQYAC</sequence>